<gene>
    <name evidence="1" type="primary">lnt</name>
    <name type="ordered locus">SYNW1623</name>
</gene>
<dbReference type="EC" id="2.3.1.269" evidence="1"/>
<dbReference type="EMBL" id="BX569693">
    <property type="protein sequence ID" value="CAE08138.1"/>
    <property type="molecule type" value="Genomic_DNA"/>
</dbReference>
<dbReference type="RefSeq" id="WP_011128487.1">
    <property type="nucleotide sequence ID" value="NC_005070.1"/>
</dbReference>
<dbReference type="SMR" id="Q7U5S4"/>
<dbReference type="STRING" id="84588.SYNW1623"/>
<dbReference type="KEGG" id="syw:SYNW1623"/>
<dbReference type="eggNOG" id="COG0815">
    <property type="taxonomic scope" value="Bacteria"/>
</dbReference>
<dbReference type="HOGENOM" id="CLU_019563_1_0_3"/>
<dbReference type="UniPathway" id="UPA00666"/>
<dbReference type="Proteomes" id="UP000001422">
    <property type="component" value="Chromosome"/>
</dbReference>
<dbReference type="GO" id="GO:0005886">
    <property type="term" value="C:plasma membrane"/>
    <property type="evidence" value="ECO:0007669"/>
    <property type="project" value="UniProtKB-SubCell"/>
</dbReference>
<dbReference type="GO" id="GO:0016410">
    <property type="term" value="F:N-acyltransferase activity"/>
    <property type="evidence" value="ECO:0007669"/>
    <property type="project" value="UniProtKB-UniRule"/>
</dbReference>
<dbReference type="GO" id="GO:0042158">
    <property type="term" value="P:lipoprotein biosynthetic process"/>
    <property type="evidence" value="ECO:0007669"/>
    <property type="project" value="UniProtKB-UniRule"/>
</dbReference>
<dbReference type="CDD" id="cd07571">
    <property type="entry name" value="ALP_N-acyl_transferase"/>
    <property type="match status" value="1"/>
</dbReference>
<dbReference type="Gene3D" id="3.60.110.10">
    <property type="entry name" value="Carbon-nitrogen hydrolase"/>
    <property type="match status" value="1"/>
</dbReference>
<dbReference type="HAMAP" id="MF_01148">
    <property type="entry name" value="Lnt"/>
    <property type="match status" value="1"/>
</dbReference>
<dbReference type="InterPro" id="IPR004563">
    <property type="entry name" value="Apolipo_AcylTrfase"/>
</dbReference>
<dbReference type="InterPro" id="IPR003010">
    <property type="entry name" value="C-N_Hydrolase"/>
</dbReference>
<dbReference type="InterPro" id="IPR036526">
    <property type="entry name" value="C-N_Hydrolase_sf"/>
</dbReference>
<dbReference type="PANTHER" id="PTHR38686">
    <property type="entry name" value="APOLIPOPROTEIN N-ACYLTRANSFERASE"/>
    <property type="match status" value="1"/>
</dbReference>
<dbReference type="PANTHER" id="PTHR38686:SF1">
    <property type="entry name" value="APOLIPOPROTEIN N-ACYLTRANSFERASE"/>
    <property type="match status" value="1"/>
</dbReference>
<dbReference type="Pfam" id="PF00795">
    <property type="entry name" value="CN_hydrolase"/>
    <property type="match status" value="1"/>
</dbReference>
<dbReference type="SUPFAM" id="SSF56317">
    <property type="entry name" value="Carbon-nitrogen hydrolase"/>
    <property type="match status" value="1"/>
</dbReference>
<dbReference type="PROSITE" id="PS50263">
    <property type="entry name" value="CN_HYDROLASE"/>
    <property type="match status" value="1"/>
</dbReference>
<name>LNT_PARMW</name>
<accession>Q7U5S4</accession>
<evidence type="ECO:0000255" key="1">
    <source>
        <dbReference type="HAMAP-Rule" id="MF_01148"/>
    </source>
</evidence>
<proteinExistence type="inferred from homology"/>
<protein>
    <recommendedName>
        <fullName evidence="1">Apolipoprotein N-acyltransferase</fullName>
        <shortName evidence="1">ALP N-acyltransferase</shortName>
        <ecNumber evidence="1">2.3.1.269</ecNumber>
    </recommendedName>
</protein>
<keyword id="KW-0012">Acyltransferase</keyword>
<keyword id="KW-0997">Cell inner membrane</keyword>
<keyword id="KW-1003">Cell membrane</keyword>
<keyword id="KW-0472">Membrane</keyword>
<keyword id="KW-0808">Transferase</keyword>
<keyword id="KW-0812">Transmembrane</keyword>
<keyword id="KW-1133">Transmembrane helix</keyword>
<organism>
    <name type="scientific">Parasynechococcus marenigrum (strain WH8102)</name>
    <dbReference type="NCBI Taxonomy" id="84588"/>
    <lineage>
        <taxon>Bacteria</taxon>
        <taxon>Bacillati</taxon>
        <taxon>Cyanobacteriota</taxon>
        <taxon>Cyanophyceae</taxon>
        <taxon>Synechococcales</taxon>
        <taxon>Prochlorococcaceae</taxon>
        <taxon>Parasynechococcus</taxon>
        <taxon>Parasynechococcus marenigrum</taxon>
    </lineage>
</organism>
<feature type="chain" id="PRO_0000178100" description="Apolipoprotein N-acyltransferase">
    <location>
        <begin position="1"/>
        <end position="465"/>
    </location>
</feature>
<feature type="transmembrane region" description="Helical" evidence="1">
    <location>
        <begin position="12"/>
        <end position="32"/>
    </location>
</feature>
<feature type="transmembrane region" description="Helical" evidence="1">
    <location>
        <begin position="49"/>
        <end position="69"/>
    </location>
</feature>
<feature type="transmembrane region" description="Helical" evidence="1">
    <location>
        <begin position="80"/>
        <end position="100"/>
    </location>
</feature>
<feature type="transmembrane region" description="Helical" evidence="1">
    <location>
        <begin position="122"/>
        <end position="142"/>
    </location>
</feature>
<feature type="transmembrane region" description="Helical" evidence="1">
    <location>
        <begin position="161"/>
        <end position="181"/>
    </location>
</feature>
<feature type="transmembrane region" description="Helical" evidence="1">
    <location>
        <begin position="189"/>
        <end position="209"/>
    </location>
</feature>
<feature type="domain" description="CN hydrolase" evidence="1">
    <location>
        <begin position="221"/>
        <end position="448"/>
    </location>
</feature>
<feature type="active site" description="Proton acceptor" evidence="1">
    <location>
        <position position="262"/>
    </location>
</feature>
<feature type="active site" evidence="1">
    <location>
        <position position="312"/>
    </location>
</feature>
<feature type="active site" description="Nucleophile" evidence="1">
    <location>
        <position position="360"/>
    </location>
</feature>
<comment type="function">
    <text evidence="1">Catalyzes the phospholipid dependent N-acylation of the N-terminal cysteine of apolipoprotein, the last step in lipoprotein maturation.</text>
</comment>
<comment type="catalytic activity">
    <reaction evidence="1">
        <text>N-terminal S-1,2-diacyl-sn-glyceryl-L-cysteinyl-[lipoprotein] + a glycerophospholipid = N-acyl-S-1,2-diacyl-sn-glyceryl-L-cysteinyl-[lipoprotein] + a 2-acyl-sn-glycero-3-phospholipid + H(+)</text>
        <dbReference type="Rhea" id="RHEA:48228"/>
        <dbReference type="Rhea" id="RHEA-COMP:14681"/>
        <dbReference type="Rhea" id="RHEA-COMP:14684"/>
        <dbReference type="ChEBI" id="CHEBI:15378"/>
        <dbReference type="ChEBI" id="CHEBI:136912"/>
        <dbReference type="ChEBI" id="CHEBI:140656"/>
        <dbReference type="ChEBI" id="CHEBI:140657"/>
        <dbReference type="ChEBI" id="CHEBI:140660"/>
        <dbReference type="EC" id="2.3.1.269"/>
    </reaction>
</comment>
<comment type="pathway">
    <text evidence="1">Protein modification; lipoprotein biosynthesis (N-acyl transfer).</text>
</comment>
<comment type="subcellular location">
    <subcellularLocation>
        <location evidence="1">Cell inner membrane</location>
        <topology evidence="1">Multi-pass membrane protein</topology>
    </subcellularLocation>
</comment>
<comment type="similarity">
    <text evidence="1">Belongs to the CN hydrolase family. Apolipoprotein N-acyltransferase subfamily.</text>
</comment>
<sequence length="465" mass="50507">MGDLRSQPLLRAVLGGLLAGLAPGVAGPLSMLPALALLWSLVERPRDAALWGLFGVLLSHRWLLGLHPLTWMGLPAWLSLPVAVAIWLSCGVAAALLLLLWSLLARLCRRRDGTWRFGAVLLLALVWGAAELLLEGSPLFWIGVGGSVLPLDRPLAGLGRWLGSGGLATLQLLWGWGLWQLWRRRGRRCAWWLISLLLAHAMGALSLSPPPALAALRLGAWQPAIPTREKFSPERQRRFQSALSSALQQAQSLKVEALVAPEGTLPFRWQADEDPLPVPLISGGFRWVRGQQRSSVLLARPDRAGVEPLVDKHRLVPLGEWLPPLPAGLTRGLSAVGGLQPGDASRFVNVWPSPFAVAICYEISDGRALAKATAQGAEWLLTIANLDPYPQLLQRQFLALAQLRAIETGRDVLSVANTGPTALVSADGTVQRLLEPQTDAVAAAELQRRQQLTGYSRLVWAWSSR</sequence>
<reference key="1">
    <citation type="journal article" date="2003" name="Nature">
        <title>The genome of a motile marine Synechococcus.</title>
        <authorList>
            <person name="Palenik B."/>
            <person name="Brahamsha B."/>
            <person name="Larimer F.W."/>
            <person name="Land M.L."/>
            <person name="Hauser L."/>
            <person name="Chain P."/>
            <person name="Lamerdin J.E."/>
            <person name="Regala W."/>
            <person name="Allen E.E."/>
            <person name="McCarren J."/>
            <person name="Paulsen I.T."/>
            <person name="Dufresne A."/>
            <person name="Partensky F."/>
            <person name="Webb E.A."/>
            <person name="Waterbury J."/>
        </authorList>
    </citation>
    <scope>NUCLEOTIDE SEQUENCE [LARGE SCALE GENOMIC DNA]</scope>
    <source>
        <strain>WH8102</strain>
    </source>
</reference>